<evidence type="ECO:0000255" key="1">
    <source>
        <dbReference type="HAMAP-Rule" id="MF_00041"/>
    </source>
</evidence>
<keyword id="KW-0030">Aminoacyl-tRNA synthetase</keyword>
<keyword id="KW-0067">ATP-binding</keyword>
<keyword id="KW-0963">Cytoplasm</keyword>
<keyword id="KW-0436">Ligase</keyword>
<keyword id="KW-0479">Metal-binding</keyword>
<keyword id="KW-0547">Nucleotide-binding</keyword>
<keyword id="KW-0648">Protein biosynthesis</keyword>
<keyword id="KW-0862">Zinc</keyword>
<protein>
    <recommendedName>
        <fullName evidence="1">Cysteine--tRNA ligase</fullName>
        <ecNumber evidence="1">6.1.1.16</ecNumber>
    </recommendedName>
    <alternativeName>
        <fullName evidence="1">Cysteinyl-tRNA synthetase</fullName>
        <shortName evidence="1">CysRS</shortName>
    </alternativeName>
</protein>
<dbReference type="EC" id="6.1.1.16" evidence="1"/>
<dbReference type="EMBL" id="AL596164">
    <property type="protein sequence ID" value="CAC95504.1"/>
    <property type="molecule type" value="Genomic_DNA"/>
</dbReference>
<dbReference type="PIR" id="AH1466">
    <property type="entry name" value="AH1466"/>
</dbReference>
<dbReference type="RefSeq" id="WP_010990303.1">
    <property type="nucleotide sequence ID" value="NC_003212.1"/>
</dbReference>
<dbReference type="SMR" id="Q92F36"/>
<dbReference type="STRING" id="272626.gene:17564598"/>
<dbReference type="GeneID" id="93233721"/>
<dbReference type="KEGG" id="lin:cysS"/>
<dbReference type="eggNOG" id="COG0215">
    <property type="taxonomic scope" value="Bacteria"/>
</dbReference>
<dbReference type="HOGENOM" id="CLU_013528_0_1_9"/>
<dbReference type="OrthoDB" id="9815130at2"/>
<dbReference type="Proteomes" id="UP000002513">
    <property type="component" value="Chromosome"/>
</dbReference>
<dbReference type="GO" id="GO:0005829">
    <property type="term" value="C:cytosol"/>
    <property type="evidence" value="ECO:0007669"/>
    <property type="project" value="TreeGrafter"/>
</dbReference>
<dbReference type="GO" id="GO:0005524">
    <property type="term" value="F:ATP binding"/>
    <property type="evidence" value="ECO:0007669"/>
    <property type="project" value="UniProtKB-UniRule"/>
</dbReference>
<dbReference type="GO" id="GO:0004817">
    <property type="term" value="F:cysteine-tRNA ligase activity"/>
    <property type="evidence" value="ECO:0007669"/>
    <property type="project" value="UniProtKB-UniRule"/>
</dbReference>
<dbReference type="GO" id="GO:0008270">
    <property type="term" value="F:zinc ion binding"/>
    <property type="evidence" value="ECO:0007669"/>
    <property type="project" value="UniProtKB-UniRule"/>
</dbReference>
<dbReference type="GO" id="GO:0006423">
    <property type="term" value="P:cysteinyl-tRNA aminoacylation"/>
    <property type="evidence" value="ECO:0007669"/>
    <property type="project" value="UniProtKB-UniRule"/>
</dbReference>
<dbReference type="CDD" id="cd00672">
    <property type="entry name" value="CysRS_core"/>
    <property type="match status" value="1"/>
</dbReference>
<dbReference type="FunFam" id="1.20.120.1910:FF:000002">
    <property type="entry name" value="Cysteine--tRNA ligase"/>
    <property type="match status" value="1"/>
</dbReference>
<dbReference type="FunFam" id="3.40.50.620:FF:000009">
    <property type="entry name" value="Cysteine--tRNA ligase"/>
    <property type="match status" value="1"/>
</dbReference>
<dbReference type="Gene3D" id="1.20.120.1910">
    <property type="entry name" value="Cysteine-tRNA ligase, C-terminal anti-codon recognition domain"/>
    <property type="match status" value="1"/>
</dbReference>
<dbReference type="Gene3D" id="3.40.50.620">
    <property type="entry name" value="HUPs"/>
    <property type="match status" value="1"/>
</dbReference>
<dbReference type="HAMAP" id="MF_00041">
    <property type="entry name" value="Cys_tRNA_synth"/>
    <property type="match status" value="1"/>
</dbReference>
<dbReference type="InterPro" id="IPR015803">
    <property type="entry name" value="Cys-tRNA-ligase"/>
</dbReference>
<dbReference type="InterPro" id="IPR015273">
    <property type="entry name" value="Cys-tRNA-synt_Ia_DALR"/>
</dbReference>
<dbReference type="InterPro" id="IPR024909">
    <property type="entry name" value="Cys-tRNA/MSH_ligase"/>
</dbReference>
<dbReference type="InterPro" id="IPR014729">
    <property type="entry name" value="Rossmann-like_a/b/a_fold"/>
</dbReference>
<dbReference type="InterPro" id="IPR032678">
    <property type="entry name" value="tRNA-synt_1_cat_dom"/>
</dbReference>
<dbReference type="InterPro" id="IPR009080">
    <property type="entry name" value="tRNAsynth_Ia_anticodon-bd"/>
</dbReference>
<dbReference type="NCBIfam" id="TIGR00435">
    <property type="entry name" value="cysS"/>
    <property type="match status" value="1"/>
</dbReference>
<dbReference type="PANTHER" id="PTHR10890:SF3">
    <property type="entry name" value="CYSTEINE--TRNA LIGASE, CYTOPLASMIC"/>
    <property type="match status" value="1"/>
</dbReference>
<dbReference type="PANTHER" id="PTHR10890">
    <property type="entry name" value="CYSTEINYL-TRNA SYNTHETASE"/>
    <property type="match status" value="1"/>
</dbReference>
<dbReference type="Pfam" id="PF09190">
    <property type="entry name" value="DALR_2"/>
    <property type="match status" value="1"/>
</dbReference>
<dbReference type="Pfam" id="PF01406">
    <property type="entry name" value="tRNA-synt_1e"/>
    <property type="match status" value="1"/>
</dbReference>
<dbReference type="PRINTS" id="PR00983">
    <property type="entry name" value="TRNASYNTHCYS"/>
</dbReference>
<dbReference type="SMART" id="SM00840">
    <property type="entry name" value="DALR_2"/>
    <property type="match status" value="1"/>
</dbReference>
<dbReference type="SUPFAM" id="SSF47323">
    <property type="entry name" value="Anticodon-binding domain of a subclass of class I aminoacyl-tRNA synthetases"/>
    <property type="match status" value="1"/>
</dbReference>
<dbReference type="SUPFAM" id="SSF52374">
    <property type="entry name" value="Nucleotidylyl transferase"/>
    <property type="match status" value="1"/>
</dbReference>
<feature type="chain" id="PRO_0000159421" description="Cysteine--tRNA ligase">
    <location>
        <begin position="1"/>
        <end position="471"/>
    </location>
</feature>
<feature type="short sequence motif" description="'HIGH' region">
    <location>
        <begin position="31"/>
        <end position="41"/>
    </location>
</feature>
<feature type="short sequence motif" description="'KMSKS' region">
    <location>
        <begin position="266"/>
        <end position="270"/>
    </location>
</feature>
<feature type="binding site" evidence="1">
    <location>
        <position position="29"/>
    </location>
    <ligand>
        <name>Zn(2+)</name>
        <dbReference type="ChEBI" id="CHEBI:29105"/>
    </ligand>
</feature>
<feature type="binding site" evidence="1">
    <location>
        <position position="209"/>
    </location>
    <ligand>
        <name>Zn(2+)</name>
        <dbReference type="ChEBI" id="CHEBI:29105"/>
    </ligand>
</feature>
<feature type="binding site" evidence="1">
    <location>
        <position position="234"/>
    </location>
    <ligand>
        <name>Zn(2+)</name>
        <dbReference type="ChEBI" id="CHEBI:29105"/>
    </ligand>
</feature>
<feature type="binding site" evidence="1">
    <location>
        <position position="238"/>
    </location>
    <ligand>
        <name>Zn(2+)</name>
        <dbReference type="ChEBI" id="CHEBI:29105"/>
    </ligand>
</feature>
<feature type="binding site" evidence="1">
    <location>
        <position position="269"/>
    </location>
    <ligand>
        <name>ATP</name>
        <dbReference type="ChEBI" id="CHEBI:30616"/>
    </ligand>
</feature>
<comment type="catalytic activity">
    <reaction evidence="1">
        <text>tRNA(Cys) + L-cysteine + ATP = L-cysteinyl-tRNA(Cys) + AMP + diphosphate</text>
        <dbReference type="Rhea" id="RHEA:17773"/>
        <dbReference type="Rhea" id="RHEA-COMP:9661"/>
        <dbReference type="Rhea" id="RHEA-COMP:9679"/>
        <dbReference type="ChEBI" id="CHEBI:30616"/>
        <dbReference type="ChEBI" id="CHEBI:33019"/>
        <dbReference type="ChEBI" id="CHEBI:35235"/>
        <dbReference type="ChEBI" id="CHEBI:78442"/>
        <dbReference type="ChEBI" id="CHEBI:78517"/>
        <dbReference type="ChEBI" id="CHEBI:456215"/>
        <dbReference type="EC" id="6.1.1.16"/>
    </reaction>
</comment>
<comment type="cofactor">
    <cofactor evidence="1">
        <name>Zn(2+)</name>
        <dbReference type="ChEBI" id="CHEBI:29105"/>
    </cofactor>
    <text evidence="1">Binds 1 zinc ion per subunit.</text>
</comment>
<comment type="subunit">
    <text evidence="1">Monomer.</text>
</comment>
<comment type="subcellular location">
    <subcellularLocation>
        <location evidence="1">Cytoplasm</location>
    </subcellularLocation>
</comment>
<comment type="similarity">
    <text evidence="1">Belongs to the class-I aminoacyl-tRNA synthetase family.</text>
</comment>
<name>SYC_LISIN</name>
<proteinExistence type="inferred from homology"/>
<gene>
    <name evidence="1" type="primary">cysS</name>
    <name type="ordered locus">lin0271</name>
</gene>
<accession>Q92F36</accession>
<reference key="1">
    <citation type="journal article" date="2001" name="Science">
        <title>Comparative genomics of Listeria species.</title>
        <authorList>
            <person name="Glaser P."/>
            <person name="Frangeul L."/>
            <person name="Buchrieser C."/>
            <person name="Rusniok C."/>
            <person name="Amend A."/>
            <person name="Baquero F."/>
            <person name="Berche P."/>
            <person name="Bloecker H."/>
            <person name="Brandt P."/>
            <person name="Chakraborty T."/>
            <person name="Charbit A."/>
            <person name="Chetouani F."/>
            <person name="Couve E."/>
            <person name="de Daruvar A."/>
            <person name="Dehoux P."/>
            <person name="Domann E."/>
            <person name="Dominguez-Bernal G."/>
            <person name="Duchaud E."/>
            <person name="Durant L."/>
            <person name="Dussurget O."/>
            <person name="Entian K.-D."/>
            <person name="Fsihi H."/>
            <person name="Garcia-del Portillo F."/>
            <person name="Garrido P."/>
            <person name="Gautier L."/>
            <person name="Goebel W."/>
            <person name="Gomez-Lopez N."/>
            <person name="Hain T."/>
            <person name="Hauf J."/>
            <person name="Jackson D."/>
            <person name="Jones L.-M."/>
            <person name="Kaerst U."/>
            <person name="Kreft J."/>
            <person name="Kuhn M."/>
            <person name="Kunst F."/>
            <person name="Kurapkat G."/>
            <person name="Madueno E."/>
            <person name="Maitournam A."/>
            <person name="Mata Vicente J."/>
            <person name="Ng E."/>
            <person name="Nedjari H."/>
            <person name="Nordsiek G."/>
            <person name="Novella S."/>
            <person name="de Pablos B."/>
            <person name="Perez-Diaz J.-C."/>
            <person name="Purcell R."/>
            <person name="Remmel B."/>
            <person name="Rose M."/>
            <person name="Schlueter T."/>
            <person name="Simoes N."/>
            <person name="Tierrez A."/>
            <person name="Vazquez-Boland J.-A."/>
            <person name="Voss H."/>
            <person name="Wehland J."/>
            <person name="Cossart P."/>
        </authorList>
    </citation>
    <scope>NUCLEOTIDE SEQUENCE [LARGE SCALE GENOMIC DNA]</scope>
    <source>
        <strain>ATCC BAA-680 / CLIP 11262</strain>
    </source>
</reference>
<sequence length="471" mass="54440">MSIQIFNTLKREKEPFKPLKDGEVKMYVCGPTVYNYIHIGNARPIIVFDTVRRYFTYRGYDVKFVSNFTDVDDKLIRAANELKLTVPEVADRFIGAYFDDVDQLNVAKATVNPRVTENMDEIIQLISTLIEKGYAYESAGDVYFRTKKFKDYGKLSGQELSELQHGARVEYNERKQDELDFTLWKAAKPGEIFWESPFGNGRPGWHIECSALAKKYLGDTIDIHAGGQDLVFPHHEDEIAQSEAATGKTFAKYWMHNAFLNIDGEKMSKSLGNFITLHDVLKDNDPNVIRFFMLSVHYRKPITLNDAILEDAKNGLERLMIAYQNIDHRIQTDDGEYVEETHEDEWLEQLTELKQAFEDDMDDDFNTANAITTFHELAKRANIYLSKETVSINVLREFLSMMRLFAEVLGLKLENTQTDSLDDSEVEALIEERLQARNERNFARADEIRDILKEKDIILEDTAQGTRFRRG</sequence>
<organism>
    <name type="scientific">Listeria innocua serovar 6a (strain ATCC BAA-680 / CLIP 11262)</name>
    <dbReference type="NCBI Taxonomy" id="272626"/>
    <lineage>
        <taxon>Bacteria</taxon>
        <taxon>Bacillati</taxon>
        <taxon>Bacillota</taxon>
        <taxon>Bacilli</taxon>
        <taxon>Bacillales</taxon>
        <taxon>Listeriaceae</taxon>
        <taxon>Listeria</taxon>
    </lineage>
</organism>